<keyword id="KW-0007">Acetylation</keyword>
<keyword id="KW-0113">Calvin cycle</keyword>
<keyword id="KW-0120">Carbon dioxide fixation</keyword>
<keyword id="KW-0150">Chloroplast</keyword>
<keyword id="KW-1015">Disulfide bond</keyword>
<keyword id="KW-0456">Lyase</keyword>
<keyword id="KW-0460">Magnesium</keyword>
<keyword id="KW-0479">Metal-binding</keyword>
<keyword id="KW-0488">Methylation</keyword>
<keyword id="KW-0503">Monooxygenase</keyword>
<keyword id="KW-0560">Oxidoreductase</keyword>
<keyword id="KW-0601">Photorespiration</keyword>
<keyword id="KW-0602">Photosynthesis</keyword>
<keyword id="KW-0934">Plastid</keyword>
<proteinExistence type="inferred from homology"/>
<comment type="function">
    <text evidence="1">RuBisCO catalyzes two reactions: the carboxylation of D-ribulose 1,5-bisphosphate, the primary event in carbon dioxide fixation, as well as the oxidative fragmentation of the pentose substrate in the photorespiration process. Both reactions occur simultaneously and in competition at the same active site.</text>
</comment>
<comment type="catalytic activity">
    <reaction evidence="1">
        <text>2 (2R)-3-phosphoglycerate + 2 H(+) = D-ribulose 1,5-bisphosphate + CO2 + H2O</text>
        <dbReference type="Rhea" id="RHEA:23124"/>
        <dbReference type="ChEBI" id="CHEBI:15377"/>
        <dbReference type="ChEBI" id="CHEBI:15378"/>
        <dbReference type="ChEBI" id="CHEBI:16526"/>
        <dbReference type="ChEBI" id="CHEBI:57870"/>
        <dbReference type="ChEBI" id="CHEBI:58272"/>
        <dbReference type="EC" id="4.1.1.39"/>
    </reaction>
</comment>
<comment type="catalytic activity">
    <reaction evidence="1">
        <text>D-ribulose 1,5-bisphosphate + O2 = 2-phosphoglycolate + (2R)-3-phosphoglycerate + 2 H(+)</text>
        <dbReference type="Rhea" id="RHEA:36631"/>
        <dbReference type="ChEBI" id="CHEBI:15378"/>
        <dbReference type="ChEBI" id="CHEBI:15379"/>
        <dbReference type="ChEBI" id="CHEBI:57870"/>
        <dbReference type="ChEBI" id="CHEBI:58033"/>
        <dbReference type="ChEBI" id="CHEBI:58272"/>
    </reaction>
</comment>
<comment type="cofactor">
    <cofactor evidence="1">
        <name>Mg(2+)</name>
        <dbReference type="ChEBI" id="CHEBI:18420"/>
    </cofactor>
    <text evidence="1">Binds 1 Mg(2+) ion per subunit.</text>
</comment>
<comment type="subunit">
    <text evidence="1">Heterohexadecamer of 8 large chains and 8 small chains; disulfide-linked. The disulfide link is formed within the large subunit homodimers.</text>
</comment>
<comment type="subcellular location">
    <subcellularLocation>
        <location>Plastid</location>
        <location>Chloroplast</location>
    </subcellularLocation>
</comment>
<comment type="PTM">
    <text evidence="1">The disulfide bond which can form in the large chain dimeric partners within the hexadecamer appears to be associated with oxidative stress and protein turnover.</text>
</comment>
<comment type="miscellaneous">
    <text evidence="1">The basic functional RuBisCO is composed of a large chain homodimer in a 'head-to-tail' conformation. In form I RuBisCO this homodimer is arranged in a barrel-like tetramer with the small subunits forming a tetrameric 'cap' on each end of the 'barrel'.</text>
</comment>
<comment type="similarity">
    <text evidence="1">Belongs to the RuBisCO large chain family. Type I subfamily.</text>
</comment>
<gene>
    <name evidence="1" type="primary">rbcL</name>
</gene>
<name>RBL_TSUHE</name>
<organism>
    <name type="scientific">Tsuga heterophylla</name>
    <name type="common">Western hemlock</name>
    <name type="synonym">Abies heterophylla</name>
    <dbReference type="NCBI Taxonomy" id="3359"/>
    <lineage>
        <taxon>Eukaryota</taxon>
        <taxon>Viridiplantae</taxon>
        <taxon>Streptophyta</taxon>
        <taxon>Embryophyta</taxon>
        <taxon>Tracheophyta</taxon>
        <taxon>Spermatophyta</taxon>
        <taxon>Pinopsida</taxon>
        <taxon>Pinidae</taxon>
        <taxon>Conifers I</taxon>
        <taxon>Pinales</taxon>
        <taxon>Pinaceae</taxon>
        <taxon>Tsuga</taxon>
    </lineage>
</organism>
<evidence type="ECO:0000255" key="1">
    <source>
        <dbReference type="HAMAP-Rule" id="MF_01338"/>
    </source>
</evidence>
<dbReference type="EC" id="4.1.1.39" evidence="1"/>
<dbReference type="EMBL" id="X63659">
    <property type="protein sequence ID" value="CAA45199.1"/>
    <property type="molecule type" value="Genomic_DNA"/>
</dbReference>
<dbReference type="PIR" id="S19223">
    <property type="entry name" value="RKJQLW"/>
</dbReference>
<dbReference type="SMR" id="P26964"/>
<dbReference type="GO" id="GO:0009507">
    <property type="term" value="C:chloroplast"/>
    <property type="evidence" value="ECO:0007669"/>
    <property type="project" value="UniProtKB-SubCell"/>
</dbReference>
<dbReference type="GO" id="GO:0000287">
    <property type="term" value="F:magnesium ion binding"/>
    <property type="evidence" value="ECO:0007669"/>
    <property type="project" value="UniProtKB-UniRule"/>
</dbReference>
<dbReference type="GO" id="GO:0004497">
    <property type="term" value="F:monooxygenase activity"/>
    <property type="evidence" value="ECO:0007669"/>
    <property type="project" value="UniProtKB-KW"/>
</dbReference>
<dbReference type="GO" id="GO:0016984">
    <property type="term" value="F:ribulose-bisphosphate carboxylase activity"/>
    <property type="evidence" value="ECO:0007669"/>
    <property type="project" value="UniProtKB-UniRule"/>
</dbReference>
<dbReference type="GO" id="GO:0009853">
    <property type="term" value="P:photorespiration"/>
    <property type="evidence" value="ECO:0007669"/>
    <property type="project" value="UniProtKB-KW"/>
</dbReference>
<dbReference type="GO" id="GO:0019253">
    <property type="term" value="P:reductive pentose-phosphate cycle"/>
    <property type="evidence" value="ECO:0007669"/>
    <property type="project" value="UniProtKB-UniRule"/>
</dbReference>
<dbReference type="CDD" id="cd08212">
    <property type="entry name" value="RuBisCO_large_I"/>
    <property type="match status" value="1"/>
</dbReference>
<dbReference type="FunFam" id="3.20.20.110:FF:000001">
    <property type="entry name" value="Ribulose bisphosphate carboxylase large chain"/>
    <property type="match status" value="1"/>
</dbReference>
<dbReference type="FunFam" id="3.30.70.150:FF:000001">
    <property type="entry name" value="Ribulose bisphosphate carboxylase large chain"/>
    <property type="match status" value="1"/>
</dbReference>
<dbReference type="Gene3D" id="3.20.20.110">
    <property type="entry name" value="Ribulose bisphosphate carboxylase, large subunit, C-terminal domain"/>
    <property type="match status" value="1"/>
</dbReference>
<dbReference type="Gene3D" id="3.30.70.150">
    <property type="entry name" value="RuBisCO large subunit, N-terminal domain"/>
    <property type="match status" value="1"/>
</dbReference>
<dbReference type="HAMAP" id="MF_01338">
    <property type="entry name" value="RuBisCO_L_type1"/>
    <property type="match status" value="1"/>
</dbReference>
<dbReference type="InterPro" id="IPR033966">
    <property type="entry name" value="RuBisCO"/>
</dbReference>
<dbReference type="InterPro" id="IPR020878">
    <property type="entry name" value="RuBisCo_large_chain_AS"/>
</dbReference>
<dbReference type="InterPro" id="IPR000685">
    <property type="entry name" value="RuBisCO_lsu_C"/>
</dbReference>
<dbReference type="InterPro" id="IPR036376">
    <property type="entry name" value="RuBisCO_lsu_C_sf"/>
</dbReference>
<dbReference type="InterPro" id="IPR017443">
    <property type="entry name" value="RuBisCO_lsu_fd_N"/>
</dbReference>
<dbReference type="InterPro" id="IPR036422">
    <property type="entry name" value="RuBisCO_lsu_N_sf"/>
</dbReference>
<dbReference type="InterPro" id="IPR020888">
    <property type="entry name" value="RuBisCO_lsuI"/>
</dbReference>
<dbReference type="NCBIfam" id="NF003252">
    <property type="entry name" value="PRK04208.1"/>
    <property type="match status" value="1"/>
</dbReference>
<dbReference type="PANTHER" id="PTHR42704">
    <property type="entry name" value="RIBULOSE BISPHOSPHATE CARBOXYLASE"/>
    <property type="match status" value="1"/>
</dbReference>
<dbReference type="PANTHER" id="PTHR42704:SF15">
    <property type="entry name" value="RIBULOSE BISPHOSPHATE CARBOXYLASE LARGE CHAIN"/>
    <property type="match status" value="1"/>
</dbReference>
<dbReference type="Pfam" id="PF00016">
    <property type="entry name" value="RuBisCO_large"/>
    <property type="match status" value="1"/>
</dbReference>
<dbReference type="Pfam" id="PF02788">
    <property type="entry name" value="RuBisCO_large_N"/>
    <property type="match status" value="1"/>
</dbReference>
<dbReference type="SFLD" id="SFLDG01052">
    <property type="entry name" value="RuBisCO"/>
    <property type="match status" value="1"/>
</dbReference>
<dbReference type="SFLD" id="SFLDS00014">
    <property type="entry name" value="RuBisCO"/>
    <property type="match status" value="1"/>
</dbReference>
<dbReference type="SFLD" id="SFLDG00301">
    <property type="entry name" value="RuBisCO-like_proteins"/>
    <property type="match status" value="1"/>
</dbReference>
<dbReference type="SUPFAM" id="SSF51649">
    <property type="entry name" value="RuBisCo, C-terminal domain"/>
    <property type="match status" value="1"/>
</dbReference>
<dbReference type="SUPFAM" id="SSF54966">
    <property type="entry name" value="RuBisCO, large subunit, small (N-terminal) domain"/>
    <property type="match status" value="1"/>
</dbReference>
<dbReference type="PROSITE" id="PS00157">
    <property type="entry name" value="RUBISCO_LARGE"/>
    <property type="match status" value="1"/>
</dbReference>
<sequence>MSPKTETKASVGFKAGVKDYRLTYYTPEYQTKDTDILAAFRVTPQPGVPPEEAGAAVAAESSTGTWTTVWTDGLTSLDRYKGRCYDIEPVPGEESQFIAYVAYPLDLFEEGSVTNLFTSIVGNVFGFKALRALRLEDLRIPPAYSKTFQGPPHGIQVERDKLNKYGRPLLGCTIKPKLGLSAKNYGRAVYECLRGGLDFTKDDENVNSQPFMRWRDRFVFCAEALYKAQAETGEIKGHYLNATAGTCEEMMKRAVFARELGVPIVMHDYLTGGFTANTTLAHYCRDNGLLLHIHRAMHAVIDRQRNHGMHFRVLAKALRMSGGDHIHAGTVVGKLEGEREVTLGFVDLLRDNYIEKDRSRGIYFTQDWVSMPGVLPVASGGIHVWHMPALTEIFGDDSVLQFGGGTLGHPWGNAPGAVANRVALEACVQARNEGRDLAREGNEVVREACKWSPELAAACEVWKEIKFEFDTIDYL</sequence>
<accession>P26964</accession>
<protein>
    <recommendedName>
        <fullName evidence="1">Ribulose bisphosphate carboxylase large chain</fullName>
        <shortName evidence="1">RuBisCO large subunit</shortName>
        <ecNumber evidence="1">4.1.1.39</ecNumber>
    </recommendedName>
</protein>
<geneLocation type="chloroplast"/>
<reference key="1">
    <citation type="submission" date="1992-01" db="EMBL/GenBank/DDBJ databases">
        <authorList>
            <person name="Doerksen A.H."/>
            <person name="Strauss S."/>
            <person name="Price R."/>
        </authorList>
    </citation>
    <scope>NUCLEOTIDE SEQUENCE [GENOMIC DNA]</scope>
</reference>
<feature type="propeptide" id="PRO_0000031431" evidence="1">
    <location>
        <begin position="1"/>
        <end position="2"/>
    </location>
</feature>
<feature type="chain" id="PRO_0000031432" description="Ribulose bisphosphate carboxylase large chain">
    <location>
        <begin position="3"/>
        <end position="475"/>
    </location>
</feature>
<feature type="active site" description="Proton acceptor" evidence="1">
    <location>
        <position position="175"/>
    </location>
</feature>
<feature type="active site" description="Proton acceptor" evidence="1">
    <location>
        <position position="294"/>
    </location>
</feature>
<feature type="binding site" description="in homodimeric partner" evidence="1">
    <location>
        <position position="123"/>
    </location>
    <ligand>
        <name>substrate</name>
    </ligand>
</feature>
<feature type="binding site" evidence="1">
    <location>
        <position position="173"/>
    </location>
    <ligand>
        <name>substrate</name>
    </ligand>
</feature>
<feature type="binding site" evidence="1">
    <location>
        <position position="177"/>
    </location>
    <ligand>
        <name>substrate</name>
    </ligand>
</feature>
<feature type="binding site" description="via carbamate group" evidence="1">
    <location>
        <position position="201"/>
    </location>
    <ligand>
        <name>Mg(2+)</name>
        <dbReference type="ChEBI" id="CHEBI:18420"/>
    </ligand>
</feature>
<feature type="binding site" evidence="1">
    <location>
        <position position="203"/>
    </location>
    <ligand>
        <name>Mg(2+)</name>
        <dbReference type="ChEBI" id="CHEBI:18420"/>
    </ligand>
</feature>
<feature type="binding site" evidence="1">
    <location>
        <position position="204"/>
    </location>
    <ligand>
        <name>Mg(2+)</name>
        <dbReference type="ChEBI" id="CHEBI:18420"/>
    </ligand>
</feature>
<feature type="binding site" evidence="1">
    <location>
        <position position="295"/>
    </location>
    <ligand>
        <name>substrate</name>
    </ligand>
</feature>
<feature type="binding site" evidence="1">
    <location>
        <position position="327"/>
    </location>
    <ligand>
        <name>substrate</name>
    </ligand>
</feature>
<feature type="binding site" evidence="1">
    <location>
        <position position="379"/>
    </location>
    <ligand>
        <name>substrate</name>
    </ligand>
</feature>
<feature type="site" description="Transition state stabilizer" evidence="1">
    <location>
        <position position="334"/>
    </location>
</feature>
<feature type="modified residue" description="N-acetylproline" evidence="1">
    <location>
        <position position="3"/>
    </location>
</feature>
<feature type="modified residue" description="N6,N6,N6-trimethyllysine" evidence="1">
    <location>
        <position position="14"/>
    </location>
</feature>
<feature type="modified residue" description="N6-carboxylysine" evidence="1">
    <location>
        <position position="201"/>
    </location>
</feature>
<feature type="disulfide bond" description="Interchain; in linked form" evidence="1">
    <location>
        <position position="247"/>
    </location>
</feature>